<protein>
    <recommendedName>
        <fullName>Endothelial cell-specific molecule 1</fullName>
        <shortName>ESM-1</shortName>
    </recommendedName>
    <alternativeName>
        <fullName>PG25</fullName>
    </alternativeName>
</protein>
<reference key="1">
    <citation type="journal article" date="1997" name="J. Neurosci. Methods">
        <title>PG25, a pineal-specific cDNA, cloned by differential display PCR (DDPCR) and rapid amplification of cDNA ends (RACE).</title>
        <authorList>
            <person name="Wang X."/>
            <person name="Brownstein M.J."/>
            <person name="Young W.S."/>
        </authorList>
    </citation>
    <scope>NUCLEOTIDE SEQUENCE [MRNA]</scope>
    <source>
        <strain>Sprague-Dawley</strain>
        <tissue>Pineal gland</tissue>
    </source>
</reference>
<reference key="2">
    <citation type="journal article" date="2004" name="Genome Res.">
        <title>The status, quality, and expansion of the NIH full-length cDNA project: the Mammalian Gene Collection (MGC).</title>
        <authorList>
            <consortium name="The MGC Project Team"/>
        </authorList>
    </citation>
    <scope>NUCLEOTIDE SEQUENCE [LARGE SCALE MRNA]</scope>
    <source>
        <tissue>Lung</tissue>
    </source>
</reference>
<proteinExistence type="evidence at transcript level"/>
<sequence>MKSLLLLTTLLIPLHLGMAWSAKYAVDCPEHCDNTECRSSLRCKRTVLDDCGCCQVCAAGPGETCYRTVSGMDGVKCGPGLKCHFYSEEDDFGDEFGVCKDCPYGTFGMDCKETCNCQSGICDRVTGRCLDFPFFQYAAAKSPSRTSASQTERDAASGDGNAVREEIGDRNAARPSVMKWLNPR</sequence>
<evidence type="ECO:0000250" key="1"/>
<evidence type="ECO:0000255" key="2"/>
<evidence type="ECO:0000255" key="3">
    <source>
        <dbReference type="PROSITE-ProRule" id="PRU00653"/>
    </source>
</evidence>
<evidence type="ECO:0000256" key="4">
    <source>
        <dbReference type="SAM" id="MobiDB-lite"/>
    </source>
</evidence>
<name>ESM1_RAT</name>
<keyword id="KW-0037">Angiogenesis</keyword>
<keyword id="KW-1015">Disulfide bond</keyword>
<keyword id="KW-0325">Glycoprotein</keyword>
<keyword id="KW-0654">Proteoglycan</keyword>
<keyword id="KW-1185">Reference proteome</keyword>
<keyword id="KW-0964">Secreted</keyword>
<keyword id="KW-0732">Signal</keyword>
<feature type="signal peptide" evidence="2">
    <location>
        <begin position="1"/>
        <end position="21"/>
    </location>
</feature>
<feature type="chain" id="PRO_0000014396" description="Endothelial cell-specific molecule 1">
    <location>
        <begin position="22"/>
        <end position="184"/>
    </location>
</feature>
<feature type="domain" description="IGFBP N-terminal" evidence="3">
    <location>
        <begin position="24"/>
        <end position="102"/>
    </location>
</feature>
<feature type="region of interest" description="Disordered" evidence="4">
    <location>
        <begin position="145"/>
        <end position="184"/>
    </location>
</feature>
<feature type="compositionally biased region" description="Basic and acidic residues" evidence="4">
    <location>
        <begin position="151"/>
        <end position="172"/>
    </location>
</feature>
<feature type="glycosylation site" description="O-linked (Xyl...) (chondroitin sulfate) serine" evidence="1">
    <location>
        <position position="157"/>
    </location>
</feature>
<feature type="disulfide bond" evidence="3">
    <location>
        <begin position="28"/>
        <end position="51"/>
    </location>
</feature>
<feature type="disulfide bond" evidence="3">
    <location>
        <begin position="32"/>
        <end position="53"/>
    </location>
</feature>
<feature type="disulfide bond" evidence="3">
    <location>
        <begin position="37"/>
        <end position="54"/>
    </location>
</feature>
<feature type="disulfide bond" evidence="3">
    <location>
        <begin position="43"/>
        <end position="57"/>
    </location>
</feature>
<feature type="disulfide bond" evidence="3">
    <location>
        <begin position="65"/>
        <end position="83"/>
    </location>
</feature>
<feature type="disulfide bond" evidence="3">
    <location>
        <begin position="77"/>
        <end position="99"/>
    </location>
</feature>
<gene>
    <name type="primary">Esm1</name>
</gene>
<accession>P97682</accession>
<dbReference type="EMBL" id="U80818">
    <property type="protein sequence ID" value="AAB39192.1"/>
    <property type="molecule type" value="mRNA"/>
</dbReference>
<dbReference type="EMBL" id="BC070888">
    <property type="protein sequence ID" value="AAH70888.1"/>
    <property type="molecule type" value="mRNA"/>
</dbReference>
<dbReference type="RefSeq" id="NP_072126.1">
    <property type="nucleotide sequence ID" value="NM_022604.2"/>
</dbReference>
<dbReference type="FunCoup" id="P97682">
    <property type="interactions" value="25"/>
</dbReference>
<dbReference type="STRING" id="10116.ENSRNOP00000014559"/>
<dbReference type="GlyCosmos" id="P97682">
    <property type="glycosylation" value="1 site, No reported glycans"/>
</dbReference>
<dbReference type="GlyGen" id="P97682">
    <property type="glycosylation" value="1 site"/>
</dbReference>
<dbReference type="PhosphoSitePlus" id="P97682"/>
<dbReference type="PaxDb" id="10116-ENSRNOP00000014559"/>
<dbReference type="Ensembl" id="ENSRNOT00000014559.6">
    <property type="protein sequence ID" value="ENSRNOP00000014559.3"/>
    <property type="gene ID" value="ENSRNOG00000010797.6"/>
</dbReference>
<dbReference type="GeneID" id="64536"/>
<dbReference type="KEGG" id="rno:64536"/>
<dbReference type="AGR" id="RGD:71013"/>
<dbReference type="CTD" id="11082"/>
<dbReference type="RGD" id="71013">
    <property type="gene designation" value="Esm1"/>
</dbReference>
<dbReference type="eggNOG" id="KOG1218">
    <property type="taxonomic scope" value="Eukaryota"/>
</dbReference>
<dbReference type="GeneTree" id="ENSGT00390000018810"/>
<dbReference type="HOGENOM" id="CLU_103395_0_0_1"/>
<dbReference type="InParanoid" id="P97682"/>
<dbReference type="OMA" id="TAWSAKY"/>
<dbReference type="OrthoDB" id="9868586at2759"/>
<dbReference type="PhylomeDB" id="P97682"/>
<dbReference type="PRO" id="PR:P97682"/>
<dbReference type="Proteomes" id="UP000002494">
    <property type="component" value="Chromosome 2"/>
</dbReference>
<dbReference type="Bgee" id="ENSRNOG00000010797">
    <property type="expression patterns" value="Expressed in adult mammalian kidney and 16 other cell types or tissues"/>
</dbReference>
<dbReference type="GO" id="GO:0005576">
    <property type="term" value="C:extracellular region"/>
    <property type="evidence" value="ECO:0007669"/>
    <property type="project" value="UniProtKB-SubCell"/>
</dbReference>
<dbReference type="GO" id="GO:0005171">
    <property type="term" value="F:hepatocyte growth factor receptor binding"/>
    <property type="evidence" value="ECO:0000266"/>
    <property type="project" value="RGD"/>
</dbReference>
<dbReference type="GO" id="GO:0005178">
    <property type="term" value="F:integrin binding"/>
    <property type="evidence" value="ECO:0000266"/>
    <property type="project" value="RGD"/>
</dbReference>
<dbReference type="GO" id="GO:0001525">
    <property type="term" value="P:angiogenesis"/>
    <property type="evidence" value="ECO:0000266"/>
    <property type="project" value="RGD"/>
</dbReference>
<dbReference type="GO" id="GO:0008284">
    <property type="term" value="P:positive regulation of cell population proliferation"/>
    <property type="evidence" value="ECO:0000266"/>
    <property type="project" value="RGD"/>
</dbReference>
<dbReference type="GO" id="GO:1902204">
    <property type="term" value="P:positive regulation of hepatocyte growth factor receptor signaling pathway"/>
    <property type="evidence" value="ECO:0000266"/>
    <property type="project" value="RGD"/>
</dbReference>
<dbReference type="GO" id="GO:0002040">
    <property type="term" value="P:sprouting angiogenesis"/>
    <property type="evidence" value="ECO:0000266"/>
    <property type="project" value="RGD"/>
</dbReference>
<dbReference type="FunFam" id="4.10.40.20:FF:000002">
    <property type="entry name" value="Endothelial cell-specific molecule 1"/>
    <property type="match status" value="1"/>
</dbReference>
<dbReference type="Gene3D" id="4.10.40.20">
    <property type="match status" value="1"/>
</dbReference>
<dbReference type="InterPro" id="IPR038850">
    <property type="entry name" value="ESM1"/>
</dbReference>
<dbReference type="InterPro" id="IPR009030">
    <property type="entry name" value="Growth_fac_rcpt_cys_sf"/>
</dbReference>
<dbReference type="InterPro" id="IPR000867">
    <property type="entry name" value="IGFBP-like"/>
</dbReference>
<dbReference type="PANTHER" id="PTHR15428:SF0">
    <property type="entry name" value="ENDOTHELIAL CELL-SPECIFIC MOLECULE 1"/>
    <property type="match status" value="1"/>
</dbReference>
<dbReference type="PANTHER" id="PTHR15428">
    <property type="entry name" value="ENDOTHELIAL CELL-SPECIFIC MOLECULE 1 ESM-1"/>
    <property type="match status" value="1"/>
</dbReference>
<dbReference type="Pfam" id="PF00219">
    <property type="entry name" value="IGFBP"/>
    <property type="match status" value="1"/>
</dbReference>
<dbReference type="SMART" id="SM00121">
    <property type="entry name" value="IB"/>
    <property type="match status" value="1"/>
</dbReference>
<dbReference type="SUPFAM" id="SSF57184">
    <property type="entry name" value="Growth factor receptor domain"/>
    <property type="match status" value="1"/>
</dbReference>
<dbReference type="PROSITE" id="PS51323">
    <property type="entry name" value="IGFBP_N_2"/>
    <property type="match status" value="1"/>
</dbReference>
<organism>
    <name type="scientific">Rattus norvegicus</name>
    <name type="common">Rat</name>
    <dbReference type="NCBI Taxonomy" id="10116"/>
    <lineage>
        <taxon>Eukaryota</taxon>
        <taxon>Metazoa</taxon>
        <taxon>Chordata</taxon>
        <taxon>Craniata</taxon>
        <taxon>Vertebrata</taxon>
        <taxon>Euteleostomi</taxon>
        <taxon>Mammalia</taxon>
        <taxon>Eutheria</taxon>
        <taxon>Euarchontoglires</taxon>
        <taxon>Glires</taxon>
        <taxon>Rodentia</taxon>
        <taxon>Myomorpha</taxon>
        <taxon>Muroidea</taxon>
        <taxon>Muridae</taxon>
        <taxon>Murinae</taxon>
        <taxon>Rattus</taxon>
    </lineage>
</organism>
<comment type="function">
    <text evidence="1">Involved in angiogenesis; promotes angiogenic sprouting. May have potent implications in lung endothelial cell-leukocyte interactions (By similarity).</text>
</comment>
<comment type="subcellular location">
    <subcellularLocation>
        <location evidence="1">Secreted</location>
    </subcellularLocation>
</comment>
<comment type="tissue specificity">
    <text>Pineal gland specific.</text>
</comment>
<comment type="PTM">
    <text evidence="1">O-glycosylated; contains chondroitin sulfate and dermatan sulfate.</text>
</comment>